<protein>
    <recommendedName>
        <fullName evidence="1">Fatty acid oxidation complex subunit alpha</fullName>
    </recommendedName>
    <domain>
        <recommendedName>
            <fullName evidence="1">Enoyl-CoA hydratase/3-hydroxybutyryl-CoA epimerase</fullName>
            <ecNumber evidence="1">4.2.1.17</ecNumber>
            <ecNumber evidence="1">5.1.2.3</ecNumber>
        </recommendedName>
    </domain>
    <domain>
        <recommendedName>
            <fullName evidence="1">3-hydroxyacyl-CoA dehydrogenase</fullName>
            <ecNumber evidence="1">1.1.1.35</ecNumber>
        </recommendedName>
    </domain>
</protein>
<gene>
    <name evidence="1" type="primary">fadJ</name>
    <name type="ordered locus">VF_1810</name>
</gene>
<feature type="chain" id="PRO_0000109311" description="Fatty acid oxidation complex subunit alpha">
    <location>
        <begin position="1"/>
        <end position="687"/>
    </location>
</feature>
<feature type="region of interest" description="Enoyl-CoA hydratase" evidence="1">
    <location>
        <begin position="1"/>
        <end position="191"/>
    </location>
</feature>
<feature type="region of interest" description="3-hydroxyacyl-CoA dehydrogenase" evidence="1">
    <location>
        <begin position="307"/>
        <end position="687"/>
    </location>
</feature>
<feature type="site" description="Important for catalytic activity" evidence="1">
    <location>
        <position position="119"/>
    </location>
</feature>
<feature type="site" description="Important for catalytic activity" evidence="1">
    <location>
        <position position="141"/>
    </location>
</feature>
<comment type="function">
    <text evidence="1">Catalyzes the formation of a hydroxyacyl-CoA by addition of water on enoyl-CoA. Also exhibits 3-hydroxyacyl-CoA epimerase and 3-hydroxyacyl-CoA dehydrogenase activities.</text>
</comment>
<comment type="catalytic activity">
    <reaction evidence="1">
        <text>a (3S)-3-hydroxyacyl-CoA = a (2E)-enoyl-CoA + H2O</text>
        <dbReference type="Rhea" id="RHEA:16105"/>
        <dbReference type="ChEBI" id="CHEBI:15377"/>
        <dbReference type="ChEBI" id="CHEBI:57318"/>
        <dbReference type="ChEBI" id="CHEBI:58856"/>
        <dbReference type="EC" id="4.2.1.17"/>
    </reaction>
</comment>
<comment type="catalytic activity">
    <reaction evidence="1">
        <text>a 4-saturated-(3S)-3-hydroxyacyl-CoA = a (3E)-enoyl-CoA + H2O</text>
        <dbReference type="Rhea" id="RHEA:20724"/>
        <dbReference type="ChEBI" id="CHEBI:15377"/>
        <dbReference type="ChEBI" id="CHEBI:58521"/>
        <dbReference type="ChEBI" id="CHEBI:137480"/>
        <dbReference type="EC" id="4.2.1.17"/>
    </reaction>
</comment>
<comment type="catalytic activity">
    <reaction evidence="1">
        <text>a (3S)-3-hydroxyacyl-CoA + NAD(+) = a 3-oxoacyl-CoA + NADH + H(+)</text>
        <dbReference type="Rhea" id="RHEA:22432"/>
        <dbReference type="ChEBI" id="CHEBI:15378"/>
        <dbReference type="ChEBI" id="CHEBI:57318"/>
        <dbReference type="ChEBI" id="CHEBI:57540"/>
        <dbReference type="ChEBI" id="CHEBI:57945"/>
        <dbReference type="ChEBI" id="CHEBI:90726"/>
        <dbReference type="EC" id="1.1.1.35"/>
    </reaction>
</comment>
<comment type="catalytic activity">
    <reaction evidence="1">
        <text>(3S)-3-hydroxybutanoyl-CoA = (3R)-3-hydroxybutanoyl-CoA</text>
        <dbReference type="Rhea" id="RHEA:21760"/>
        <dbReference type="ChEBI" id="CHEBI:57315"/>
        <dbReference type="ChEBI" id="CHEBI:57316"/>
        <dbReference type="EC" id="5.1.2.3"/>
    </reaction>
</comment>
<comment type="pathway">
    <text evidence="1">Lipid metabolism; fatty acid beta-oxidation.</text>
</comment>
<comment type="subunit">
    <text evidence="1">Heterotetramer of two alpha chains (FadJ) and two beta chains (FadI).</text>
</comment>
<comment type="subcellular location">
    <subcellularLocation>
        <location evidence="1">Cytoplasm</location>
    </subcellularLocation>
</comment>
<comment type="similarity">
    <text evidence="1">In the N-terminal section; belongs to the enoyl-CoA hydratase/isomerase family.</text>
</comment>
<comment type="similarity">
    <text evidence="1">In the central section; belongs to the 3-hydroxyacyl-CoA dehydrogenase family.</text>
</comment>
<comment type="sequence caution" evidence="2">
    <conflict type="erroneous initiation">
        <sequence resource="EMBL-CDS" id="AAW86305"/>
    </conflict>
</comment>
<accession>Q5E3U1</accession>
<dbReference type="EC" id="4.2.1.17" evidence="1"/>
<dbReference type="EC" id="5.1.2.3" evidence="1"/>
<dbReference type="EC" id="1.1.1.35" evidence="1"/>
<dbReference type="EMBL" id="CP000020">
    <property type="protein sequence ID" value="AAW86305.1"/>
    <property type="status" value="ALT_INIT"/>
    <property type="molecule type" value="Genomic_DNA"/>
</dbReference>
<dbReference type="RefSeq" id="WP_011262339.1">
    <property type="nucleotide sequence ID" value="NZ_CAWLES010000001.1"/>
</dbReference>
<dbReference type="RefSeq" id="YP_205193.1">
    <property type="nucleotide sequence ID" value="NC_006840.2"/>
</dbReference>
<dbReference type="SMR" id="Q5E3U1"/>
<dbReference type="STRING" id="312309.VF_1810"/>
<dbReference type="EnsemblBacteria" id="AAW86305">
    <property type="protein sequence ID" value="AAW86305"/>
    <property type="gene ID" value="VF_1810"/>
</dbReference>
<dbReference type="GeneID" id="54164511"/>
<dbReference type="KEGG" id="vfi:VF_1810"/>
<dbReference type="PATRIC" id="fig|312309.11.peg.1838"/>
<dbReference type="eggNOG" id="COG1024">
    <property type="taxonomic scope" value="Bacteria"/>
</dbReference>
<dbReference type="eggNOG" id="COG1250">
    <property type="taxonomic scope" value="Bacteria"/>
</dbReference>
<dbReference type="HOGENOM" id="CLU_009834_16_1_6"/>
<dbReference type="OrthoDB" id="5389341at2"/>
<dbReference type="UniPathway" id="UPA00659"/>
<dbReference type="Proteomes" id="UP000000537">
    <property type="component" value="Chromosome I"/>
</dbReference>
<dbReference type="GO" id="GO:0005737">
    <property type="term" value="C:cytoplasm"/>
    <property type="evidence" value="ECO:0007669"/>
    <property type="project" value="UniProtKB-SubCell"/>
</dbReference>
<dbReference type="GO" id="GO:0008692">
    <property type="term" value="F:3-hydroxybutyryl-CoA epimerase activity"/>
    <property type="evidence" value="ECO:0007669"/>
    <property type="project" value="UniProtKB-UniRule"/>
</dbReference>
<dbReference type="GO" id="GO:0004300">
    <property type="term" value="F:enoyl-CoA hydratase activity"/>
    <property type="evidence" value="ECO:0007669"/>
    <property type="project" value="UniProtKB-UniRule"/>
</dbReference>
<dbReference type="GO" id="GO:0016509">
    <property type="term" value="F:long-chain-3-hydroxyacyl-CoA dehydrogenase activity"/>
    <property type="evidence" value="ECO:0007669"/>
    <property type="project" value="TreeGrafter"/>
</dbReference>
<dbReference type="GO" id="GO:0070403">
    <property type="term" value="F:NAD+ binding"/>
    <property type="evidence" value="ECO:0007669"/>
    <property type="project" value="InterPro"/>
</dbReference>
<dbReference type="GO" id="GO:0006635">
    <property type="term" value="P:fatty acid beta-oxidation"/>
    <property type="evidence" value="ECO:0007669"/>
    <property type="project" value="UniProtKB-UniRule"/>
</dbReference>
<dbReference type="CDD" id="cd06558">
    <property type="entry name" value="crotonase-like"/>
    <property type="match status" value="1"/>
</dbReference>
<dbReference type="FunFam" id="3.90.226.10:FF:000011">
    <property type="entry name" value="Fatty acid oxidation complex subunit alpha"/>
    <property type="match status" value="1"/>
</dbReference>
<dbReference type="FunFam" id="3.40.50.720:FF:000009">
    <property type="entry name" value="Fatty oxidation complex, alpha subunit"/>
    <property type="match status" value="1"/>
</dbReference>
<dbReference type="Gene3D" id="1.10.1040.50">
    <property type="match status" value="1"/>
</dbReference>
<dbReference type="Gene3D" id="3.90.226.10">
    <property type="entry name" value="2-enoyl-CoA Hydratase, Chain A, domain 1"/>
    <property type="match status" value="1"/>
</dbReference>
<dbReference type="Gene3D" id="3.40.50.720">
    <property type="entry name" value="NAD(P)-binding Rossmann-like Domain"/>
    <property type="match status" value="1"/>
</dbReference>
<dbReference type="HAMAP" id="MF_01617">
    <property type="entry name" value="FadJ"/>
    <property type="match status" value="1"/>
</dbReference>
<dbReference type="InterPro" id="IPR006180">
    <property type="entry name" value="3-OHacyl-CoA_DH_CS"/>
</dbReference>
<dbReference type="InterPro" id="IPR006176">
    <property type="entry name" value="3-OHacyl-CoA_DH_NAD-bd"/>
</dbReference>
<dbReference type="InterPro" id="IPR006108">
    <property type="entry name" value="3HC_DH_C"/>
</dbReference>
<dbReference type="InterPro" id="IPR008927">
    <property type="entry name" value="6-PGluconate_DH-like_C_sf"/>
</dbReference>
<dbReference type="InterPro" id="IPR029045">
    <property type="entry name" value="ClpP/crotonase-like_dom_sf"/>
</dbReference>
<dbReference type="InterPro" id="IPR018376">
    <property type="entry name" value="Enoyl-CoA_hyd/isom_CS"/>
</dbReference>
<dbReference type="InterPro" id="IPR001753">
    <property type="entry name" value="Enoyl-CoA_hydra/iso"/>
</dbReference>
<dbReference type="InterPro" id="IPR050136">
    <property type="entry name" value="FA_oxidation_alpha_subunit"/>
</dbReference>
<dbReference type="InterPro" id="IPR012802">
    <property type="entry name" value="FadJ"/>
</dbReference>
<dbReference type="InterPro" id="IPR036291">
    <property type="entry name" value="NAD(P)-bd_dom_sf"/>
</dbReference>
<dbReference type="NCBIfam" id="TIGR02440">
    <property type="entry name" value="FadJ"/>
    <property type="match status" value="1"/>
</dbReference>
<dbReference type="NCBIfam" id="NF008363">
    <property type="entry name" value="PRK11154.1"/>
    <property type="match status" value="1"/>
</dbReference>
<dbReference type="PANTHER" id="PTHR43612">
    <property type="entry name" value="TRIFUNCTIONAL ENZYME SUBUNIT ALPHA"/>
    <property type="match status" value="1"/>
</dbReference>
<dbReference type="PANTHER" id="PTHR43612:SF3">
    <property type="entry name" value="TRIFUNCTIONAL ENZYME SUBUNIT ALPHA, MITOCHONDRIAL"/>
    <property type="match status" value="1"/>
</dbReference>
<dbReference type="Pfam" id="PF00725">
    <property type="entry name" value="3HCDH"/>
    <property type="match status" value="1"/>
</dbReference>
<dbReference type="Pfam" id="PF02737">
    <property type="entry name" value="3HCDH_N"/>
    <property type="match status" value="1"/>
</dbReference>
<dbReference type="Pfam" id="PF00378">
    <property type="entry name" value="ECH_1"/>
    <property type="match status" value="1"/>
</dbReference>
<dbReference type="SUPFAM" id="SSF48179">
    <property type="entry name" value="6-phosphogluconate dehydrogenase C-terminal domain-like"/>
    <property type="match status" value="2"/>
</dbReference>
<dbReference type="SUPFAM" id="SSF52096">
    <property type="entry name" value="ClpP/crotonase"/>
    <property type="match status" value="1"/>
</dbReference>
<dbReference type="SUPFAM" id="SSF51735">
    <property type="entry name" value="NAD(P)-binding Rossmann-fold domains"/>
    <property type="match status" value="1"/>
</dbReference>
<dbReference type="PROSITE" id="PS00067">
    <property type="entry name" value="3HCDH"/>
    <property type="match status" value="1"/>
</dbReference>
<dbReference type="PROSITE" id="PS00166">
    <property type="entry name" value="ENOYL_COA_HYDRATASE"/>
    <property type="match status" value="1"/>
</dbReference>
<evidence type="ECO:0000255" key="1">
    <source>
        <dbReference type="HAMAP-Rule" id="MF_01617"/>
    </source>
</evidence>
<evidence type="ECO:0000305" key="2"/>
<reference key="1">
    <citation type="journal article" date="2005" name="Proc. Natl. Acad. Sci. U.S.A.">
        <title>Complete genome sequence of Vibrio fischeri: a symbiotic bacterium with pathogenic congeners.</title>
        <authorList>
            <person name="Ruby E.G."/>
            <person name="Urbanowski M."/>
            <person name="Campbell J."/>
            <person name="Dunn A."/>
            <person name="Faini M."/>
            <person name="Gunsalus R."/>
            <person name="Lostroh P."/>
            <person name="Lupp C."/>
            <person name="McCann J."/>
            <person name="Millikan D."/>
            <person name="Schaefer A."/>
            <person name="Stabb E."/>
            <person name="Stevens A."/>
            <person name="Visick K."/>
            <person name="Whistler C."/>
            <person name="Greenberg E.P."/>
        </authorList>
    </citation>
    <scope>NUCLEOTIDE SEQUENCE [LARGE SCALE GENOMIC DNA]</scope>
    <source>
        <strain>ATCC 700601 / ES114</strain>
    </source>
</reference>
<sequence>MKNTSAFAWTKDDEQIAWLTIDVPNEKMNTLQAAFAEQVTQVLDEIEEQQAHIKGLVIQSGKPDNFIAGADINMIANCQNASEAQALAEKGQHLFQRIEDLPFATVAAIHGPCLGGGLELALACDYRVCSDDNKTKLGLPEVQLGLLPGSGGTQRLPRLIGLLPSLDIILTGKQLRPKTALKLGVVDASVPHTILSRIAADFALKKKAKRKLTAKEWGLSRNPLGRNVIFSQAEKQAQKKARGNYPAIAAILDCIEHGLDKGMKKGLQREAEQFARLAMTPESAALRSLFFAMTEMKKEKGSDAEPKSIDYVGVLGGGLMGGGIAHVSIAKAKKKVTIKDINNDGLLNAYQYHYQRLDTLRKRRIISKAQLQQQMLQLTGVTEFDGFKKLDVVVEAVFEDLNLKQEMVKAVQEQGKEDVIFATNTSSLPIGQIAEGAQKPENIVGLHYFSPVEKMPLVEVIPHATTSDETISTVVALAKQQGKTPIVVKDSAGFYVNRILAPYMNEAARLLLAGEPIEVLDEALLDFGFPVGPISLLDEVGVDIGAKIMPILEAELGDRFRSPDVFQTLIDDKRLGKKTKRGFYVYKGKKKEPDQEVYTLLNIKPQSQLSKNEIAMRCVLPMLAEAKRCLDEGIIASERDGDIGAIFGIGFPPFLGGPFTYMNTLGEEKLATLMRNYADKYGDRFIE</sequence>
<keyword id="KW-0963">Cytoplasm</keyword>
<keyword id="KW-0276">Fatty acid metabolism</keyword>
<keyword id="KW-0413">Isomerase</keyword>
<keyword id="KW-0442">Lipid degradation</keyword>
<keyword id="KW-0443">Lipid metabolism</keyword>
<keyword id="KW-0456">Lyase</keyword>
<keyword id="KW-0511">Multifunctional enzyme</keyword>
<keyword id="KW-0520">NAD</keyword>
<keyword id="KW-0560">Oxidoreductase</keyword>
<keyword id="KW-1185">Reference proteome</keyword>
<organism>
    <name type="scientific">Aliivibrio fischeri (strain ATCC 700601 / ES114)</name>
    <name type="common">Vibrio fischeri</name>
    <dbReference type="NCBI Taxonomy" id="312309"/>
    <lineage>
        <taxon>Bacteria</taxon>
        <taxon>Pseudomonadati</taxon>
        <taxon>Pseudomonadota</taxon>
        <taxon>Gammaproteobacteria</taxon>
        <taxon>Vibrionales</taxon>
        <taxon>Vibrionaceae</taxon>
        <taxon>Aliivibrio</taxon>
    </lineage>
</organism>
<proteinExistence type="inferred from homology"/>
<name>FADJ_ALIF1</name>